<feature type="chain" id="PRO_0000227674" description="Probable E3 ubiquitin-protein ligase HUL4">
    <location>
        <begin position="1"/>
        <end position="839"/>
    </location>
</feature>
<feature type="domain" description="HECT" evidence="3">
    <location>
        <begin position="497"/>
        <end position="839"/>
    </location>
</feature>
<feature type="active site" description="Glycyl thioester intermediate" evidence="3">
    <location>
        <position position="807"/>
    </location>
</feature>
<keyword id="KW-0539">Nucleus</keyword>
<keyword id="KW-1185">Reference proteome</keyword>
<keyword id="KW-0808">Transferase</keyword>
<keyword id="KW-0833">Ubl conjugation pathway</keyword>
<proteinExistence type="inferred from homology"/>
<gene>
    <name type="primary">HUL4</name>
    <name type="ordered locus">AEL068W</name>
</gene>
<accession>Q757T0</accession>
<organism>
    <name type="scientific">Eremothecium gossypii (strain ATCC 10895 / CBS 109.51 / FGSC 9923 / NRRL Y-1056)</name>
    <name type="common">Yeast</name>
    <name type="synonym">Ashbya gossypii</name>
    <dbReference type="NCBI Taxonomy" id="284811"/>
    <lineage>
        <taxon>Eukaryota</taxon>
        <taxon>Fungi</taxon>
        <taxon>Dikarya</taxon>
        <taxon>Ascomycota</taxon>
        <taxon>Saccharomycotina</taxon>
        <taxon>Saccharomycetes</taxon>
        <taxon>Saccharomycetales</taxon>
        <taxon>Saccharomycetaceae</taxon>
        <taxon>Eremothecium</taxon>
    </lineage>
</organism>
<comment type="function">
    <text evidence="2">Probable E3 ubiquitin-protein ligase, component of the TRAMP complex which has a poly(A) RNA polymerase activity and is involved in a post-transcriptional quality control mechanism limiting inappropriate expression of genetic information. Polyadenylation is required for the degradative activity of the exosome on several of its nuclear RNA substrates.</text>
</comment>
<comment type="catalytic activity">
    <reaction>
        <text>S-ubiquitinyl-[E2 ubiquitin-conjugating enzyme]-L-cysteine + [acceptor protein]-L-lysine = [E2 ubiquitin-conjugating enzyme]-L-cysteine + N(6)-ubiquitinyl-[acceptor protein]-L-lysine.</text>
        <dbReference type="EC" id="2.3.2.26"/>
    </reaction>
</comment>
<comment type="subunit">
    <text evidence="1">Component of the TRAMP complex.</text>
</comment>
<comment type="subcellular location">
    <subcellularLocation>
        <location evidence="4">Nucleus</location>
    </subcellularLocation>
</comment>
<comment type="similarity">
    <text evidence="4">Belongs to the HUL4 family.</text>
</comment>
<evidence type="ECO:0000250" key="1"/>
<evidence type="ECO:0000250" key="2">
    <source>
        <dbReference type="UniProtKB" id="P40985"/>
    </source>
</evidence>
<evidence type="ECO:0000255" key="3">
    <source>
        <dbReference type="PROSITE-ProRule" id="PRU00104"/>
    </source>
</evidence>
<evidence type="ECO:0000305" key="4"/>
<sequence>MSFFSRNINSKDRHKIQIISNSTAPSFEPNNEFVTSSCCCCGTILQHPKNISKFRCSVCYVTVVLQGTAFTQDKTELFDLDDMRELLSSCNNTYRELDKDEKRLRKHEVFHLLEDYIATRMVTIFPLNASFESSNPREMLDYDQVKEFYRILMELPTKKPFYSFLVACNELLKRPHVALNTPTPTNPKYKRIGLFRWILIILEVPIFKQTLANAEARCNTPHFRAISYEVLKKAVGYMSCLDEASAKELVHFLKYMQKDIFASKVELVNMYITFHFARILHTIGKETNNGKYSPQLEDFEHSEKLNPSLNQGSAKKLVHTNMNIFFGGIVRPMTSSANSKDILALNYRFSPEDYGNEWHIKTGARLLLCLYVANQSAYKCPVSNFYNTMIDFVDYKRDFELWQDLSKLSASHEKENSGSSGPRYSPVQFTICQCPFLFSLGMKISILEYETRRLMEYSAEQAFLKALDRKQVVDVYLKIRVRREFVTTDSLRSIQNQQKDLKKSLRIEFVNEPGIDAGGLRKEWFLLLTRDLFNPNNGLFVYVPESRLCWFSIMESIEHELLQGEGSSSELYYLFGVVLGLAIYNSTILDLKFPRAFYKKICGEVLSVNDFLELYPETGTNMLKMLEYDGEDFEDIFALTFETCFPDRFDESKIHYRQLCPDGSTQAVTRENKHEYFRLWMDFYLNRSIAPGFESFRNGFFHVIEGNSFRLFGSEELEQLVCGSNEQSLDVSMLRSVTRYQGGFDDNSPVVQWFWEILSEMEYPQQRKLLHFVTGSDRVPATGVTTIPFRISRIRSGADRLPLSHTCFNEICLHEYKDKETLRNKLIIALEESQGYGFR</sequence>
<protein>
    <recommendedName>
        <fullName>Probable E3 ubiquitin-protein ligase HUL4</fullName>
        <ecNumber>2.3.2.26</ecNumber>
    </recommendedName>
    <alternativeName>
        <fullName>HECT ubiquitin ligase 4</fullName>
    </alternativeName>
    <alternativeName>
        <fullName>HECT-type E3 ubiquitin transferase HUL4</fullName>
    </alternativeName>
</protein>
<dbReference type="EC" id="2.3.2.26"/>
<dbReference type="EMBL" id="AE016818">
    <property type="protein sequence ID" value="AAS52617.1"/>
    <property type="molecule type" value="Genomic_DNA"/>
</dbReference>
<dbReference type="RefSeq" id="NP_984793.1">
    <property type="nucleotide sequence ID" value="NM_210147.1"/>
</dbReference>
<dbReference type="SMR" id="Q757T0"/>
<dbReference type="FunCoup" id="Q757T0">
    <property type="interactions" value="82"/>
</dbReference>
<dbReference type="STRING" id="284811.Q757T0"/>
<dbReference type="EnsemblFungi" id="AAS52617">
    <property type="protein sequence ID" value="AAS52617"/>
    <property type="gene ID" value="AGOS_AEL068W"/>
</dbReference>
<dbReference type="GeneID" id="4620985"/>
<dbReference type="KEGG" id="ago:AGOS_AEL068W"/>
<dbReference type="eggNOG" id="KOG0941">
    <property type="taxonomic scope" value="Eukaryota"/>
</dbReference>
<dbReference type="HOGENOM" id="CLU_002173_5_1_1"/>
<dbReference type="InParanoid" id="Q757T0"/>
<dbReference type="OMA" id="MYYLFGA"/>
<dbReference type="OrthoDB" id="8068875at2759"/>
<dbReference type="Proteomes" id="UP000000591">
    <property type="component" value="Chromosome V"/>
</dbReference>
<dbReference type="GO" id="GO:0031499">
    <property type="term" value="C:TRAMP complex"/>
    <property type="evidence" value="ECO:0007669"/>
    <property type="project" value="EnsemblFungi"/>
</dbReference>
<dbReference type="GO" id="GO:0061630">
    <property type="term" value="F:ubiquitin protein ligase activity"/>
    <property type="evidence" value="ECO:0000318"/>
    <property type="project" value="GO_Central"/>
</dbReference>
<dbReference type="GO" id="GO:0000209">
    <property type="term" value="P:protein polyubiquitination"/>
    <property type="evidence" value="ECO:0007669"/>
    <property type="project" value="InterPro"/>
</dbReference>
<dbReference type="CDD" id="cd00078">
    <property type="entry name" value="HECTc"/>
    <property type="match status" value="1"/>
</dbReference>
<dbReference type="FunFam" id="3.30.2410.10:FF:000003">
    <property type="entry name" value="probable E3 ubiquitin-protein ligase HERC4 isoform X1"/>
    <property type="match status" value="1"/>
</dbReference>
<dbReference type="Gene3D" id="3.30.2160.10">
    <property type="entry name" value="Hect, E3 ligase catalytic domain"/>
    <property type="match status" value="1"/>
</dbReference>
<dbReference type="Gene3D" id="3.30.2410.10">
    <property type="entry name" value="Hect, E3 ligase catalytic domain"/>
    <property type="match status" value="1"/>
</dbReference>
<dbReference type="Gene3D" id="3.90.1750.10">
    <property type="entry name" value="Hect, E3 ligase catalytic domains"/>
    <property type="match status" value="1"/>
</dbReference>
<dbReference type="InterPro" id="IPR044611">
    <property type="entry name" value="E3A/B/C-like"/>
</dbReference>
<dbReference type="InterPro" id="IPR000569">
    <property type="entry name" value="HECT_dom"/>
</dbReference>
<dbReference type="InterPro" id="IPR035983">
    <property type="entry name" value="Hect_E3_ubiquitin_ligase"/>
</dbReference>
<dbReference type="PANTHER" id="PTHR45700:SF8">
    <property type="entry name" value="HECT-TYPE E3 UBIQUITIN TRANSFERASE"/>
    <property type="match status" value="1"/>
</dbReference>
<dbReference type="PANTHER" id="PTHR45700">
    <property type="entry name" value="UBIQUITIN-PROTEIN LIGASE E3C"/>
    <property type="match status" value="1"/>
</dbReference>
<dbReference type="Pfam" id="PF00632">
    <property type="entry name" value="HECT"/>
    <property type="match status" value="1"/>
</dbReference>
<dbReference type="SMART" id="SM00119">
    <property type="entry name" value="HECTc"/>
    <property type="match status" value="1"/>
</dbReference>
<dbReference type="SUPFAM" id="SSF56204">
    <property type="entry name" value="Hect, E3 ligase catalytic domain"/>
    <property type="match status" value="1"/>
</dbReference>
<dbReference type="PROSITE" id="PS50237">
    <property type="entry name" value="HECT"/>
    <property type="match status" value="1"/>
</dbReference>
<name>HUL4_EREGS</name>
<reference key="1">
    <citation type="journal article" date="2004" name="Science">
        <title>The Ashbya gossypii genome as a tool for mapping the ancient Saccharomyces cerevisiae genome.</title>
        <authorList>
            <person name="Dietrich F.S."/>
            <person name="Voegeli S."/>
            <person name="Brachat S."/>
            <person name="Lerch A."/>
            <person name="Gates K."/>
            <person name="Steiner S."/>
            <person name="Mohr C."/>
            <person name="Poehlmann R."/>
            <person name="Luedi P."/>
            <person name="Choi S."/>
            <person name="Wing R.A."/>
            <person name="Flavier A."/>
            <person name="Gaffney T.D."/>
            <person name="Philippsen P."/>
        </authorList>
    </citation>
    <scope>NUCLEOTIDE SEQUENCE [LARGE SCALE GENOMIC DNA]</scope>
    <source>
        <strain>ATCC 10895 / CBS 109.51 / FGSC 9923 / NRRL Y-1056</strain>
    </source>
</reference>
<reference key="2">
    <citation type="journal article" date="2013" name="G3 (Bethesda)">
        <title>Genomes of Ashbya fungi isolated from insects reveal four mating-type loci, numerous translocations, lack of transposons, and distinct gene duplications.</title>
        <authorList>
            <person name="Dietrich F.S."/>
            <person name="Voegeli S."/>
            <person name="Kuo S."/>
            <person name="Philippsen P."/>
        </authorList>
    </citation>
    <scope>GENOME REANNOTATION</scope>
    <source>
        <strain>ATCC 10895 / CBS 109.51 / FGSC 9923 / NRRL Y-1056</strain>
    </source>
</reference>